<proteinExistence type="inferred from homology"/>
<feature type="chain" id="PRO_1000072997" description="tRNA (guanine-N(7)-)-methyltransferase">
    <location>
        <begin position="1"/>
        <end position="217"/>
    </location>
</feature>
<feature type="region of interest" description="Interaction with RNA" evidence="2">
    <location>
        <begin position="125"/>
        <end position="130"/>
    </location>
</feature>
<feature type="active site" evidence="1">
    <location>
        <position position="119"/>
    </location>
</feature>
<feature type="binding site" evidence="2">
    <location>
        <position position="45"/>
    </location>
    <ligand>
        <name>S-adenosyl-L-methionine</name>
        <dbReference type="ChEBI" id="CHEBI:59789"/>
    </ligand>
</feature>
<feature type="binding site" evidence="2">
    <location>
        <position position="70"/>
    </location>
    <ligand>
        <name>S-adenosyl-L-methionine</name>
        <dbReference type="ChEBI" id="CHEBI:59789"/>
    </ligand>
</feature>
<feature type="binding site" evidence="2">
    <location>
        <position position="97"/>
    </location>
    <ligand>
        <name>S-adenosyl-L-methionine</name>
        <dbReference type="ChEBI" id="CHEBI:59789"/>
    </ligand>
</feature>
<feature type="binding site" evidence="2">
    <location>
        <position position="119"/>
    </location>
    <ligand>
        <name>S-adenosyl-L-methionine</name>
        <dbReference type="ChEBI" id="CHEBI:59789"/>
    </ligand>
</feature>
<feature type="binding site" evidence="2">
    <location>
        <position position="123"/>
    </location>
    <ligand>
        <name>substrate</name>
    </ligand>
</feature>
<feature type="binding site" evidence="2">
    <location>
        <position position="155"/>
    </location>
    <ligand>
        <name>substrate</name>
    </ligand>
</feature>
<feature type="binding site" evidence="2">
    <location>
        <begin position="195"/>
        <end position="198"/>
    </location>
    <ligand>
        <name>substrate</name>
    </ligand>
</feature>
<accession>A8YWH0</accession>
<gene>
    <name evidence="2" type="primary">trmB</name>
    <name type="ordered locus">lhv_1653</name>
</gene>
<dbReference type="EC" id="2.1.1.33" evidence="2"/>
<dbReference type="EMBL" id="CP000517">
    <property type="protein sequence ID" value="ABX27556.1"/>
    <property type="molecule type" value="Genomic_DNA"/>
</dbReference>
<dbReference type="RefSeq" id="WP_012212149.1">
    <property type="nucleotide sequence ID" value="NC_010080.1"/>
</dbReference>
<dbReference type="SMR" id="A8YWH0"/>
<dbReference type="GeneID" id="83724879"/>
<dbReference type="KEGG" id="lhe:lhv_1653"/>
<dbReference type="eggNOG" id="COG0220">
    <property type="taxonomic scope" value="Bacteria"/>
</dbReference>
<dbReference type="HOGENOM" id="CLU_050910_2_1_9"/>
<dbReference type="UniPathway" id="UPA00989"/>
<dbReference type="Proteomes" id="UP000000790">
    <property type="component" value="Chromosome"/>
</dbReference>
<dbReference type="GO" id="GO:0043527">
    <property type="term" value="C:tRNA methyltransferase complex"/>
    <property type="evidence" value="ECO:0007669"/>
    <property type="project" value="TreeGrafter"/>
</dbReference>
<dbReference type="GO" id="GO:0008176">
    <property type="term" value="F:tRNA (guanine(46)-N7)-methyltransferase activity"/>
    <property type="evidence" value="ECO:0007669"/>
    <property type="project" value="UniProtKB-UniRule"/>
</dbReference>
<dbReference type="CDD" id="cd02440">
    <property type="entry name" value="AdoMet_MTases"/>
    <property type="match status" value="1"/>
</dbReference>
<dbReference type="FunFam" id="3.40.50.150:FF:000035">
    <property type="entry name" value="tRNA (guanine-N(7)-)-methyltransferase"/>
    <property type="match status" value="1"/>
</dbReference>
<dbReference type="Gene3D" id="3.40.50.150">
    <property type="entry name" value="Vaccinia Virus protein VP39"/>
    <property type="match status" value="1"/>
</dbReference>
<dbReference type="HAMAP" id="MF_01057">
    <property type="entry name" value="tRNA_methyltr_TrmB"/>
    <property type="match status" value="1"/>
</dbReference>
<dbReference type="InterPro" id="IPR029063">
    <property type="entry name" value="SAM-dependent_MTases_sf"/>
</dbReference>
<dbReference type="InterPro" id="IPR003358">
    <property type="entry name" value="tRNA_(Gua-N-7)_MeTrfase_Trmb"/>
</dbReference>
<dbReference type="InterPro" id="IPR055361">
    <property type="entry name" value="tRNA_methyltr_TrmB_bact"/>
</dbReference>
<dbReference type="NCBIfam" id="NF001080">
    <property type="entry name" value="PRK00121.2-2"/>
    <property type="match status" value="1"/>
</dbReference>
<dbReference type="NCBIfam" id="TIGR00091">
    <property type="entry name" value="tRNA (guanosine(46)-N7)-methyltransferase TrmB"/>
    <property type="match status" value="1"/>
</dbReference>
<dbReference type="PANTHER" id="PTHR23417">
    <property type="entry name" value="3-DEOXY-D-MANNO-OCTULOSONIC-ACID TRANSFERASE/TRNA GUANINE-N 7 - -METHYLTRANSFERASE"/>
    <property type="match status" value="1"/>
</dbReference>
<dbReference type="PANTHER" id="PTHR23417:SF14">
    <property type="entry name" value="PENTACOTRIPEPTIDE-REPEAT REGION OF PRORP DOMAIN-CONTAINING PROTEIN"/>
    <property type="match status" value="1"/>
</dbReference>
<dbReference type="Pfam" id="PF02390">
    <property type="entry name" value="Methyltransf_4"/>
    <property type="match status" value="1"/>
</dbReference>
<dbReference type="SUPFAM" id="SSF53335">
    <property type="entry name" value="S-adenosyl-L-methionine-dependent methyltransferases"/>
    <property type="match status" value="1"/>
</dbReference>
<dbReference type="PROSITE" id="PS51625">
    <property type="entry name" value="SAM_MT_TRMB"/>
    <property type="match status" value="1"/>
</dbReference>
<evidence type="ECO:0000250" key="1"/>
<evidence type="ECO:0000255" key="2">
    <source>
        <dbReference type="HAMAP-Rule" id="MF_01057"/>
    </source>
</evidence>
<comment type="function">
    <text evidence="2">Catalyzes the formation of N(7)-methylguanine at position 46 (m7G46) in tRNA.</text>
</comment>
<comment type="catalytic activity">
    <reaction evidence="2">
        <text>guanosine(46) in tRNA + S-adenosyl-L-methionine = N(7)-methylguanosine(46) in tRNA + S-adenosyl-L-homocysteine</text>
        <dbReference type="Rhea" id="RHEA:42708"/>
        <dbReference type="Rhea" id="RHEA-COMP:10188"/>
        <dbReference type="Rhea" id="RHEA-COMP:10189"/>
        <dbReference type="ChEBI" id="CHEBI:57856"/>
        <dbReference type="ChEBI" id="CHEBI:59789"/>
        <dbReference type="ChEBI" id="CHEBI:74269"/>
        <dbReference type="ChEBI" id="CHEBI:74480"/>
        <dbReference type="EC" id="2.1.1.33"/>
    </reaction>
</comment>
<comment type="pathway">
    <text evidence="2">tRNA modification; N(7)-methylguanine-tRNA biosynthesis.</text>
</comment>
<comment type="similarity">
    <text evidence="2">Belongs to the class I-like SAM-binding methyltransferase superfamily. TrmB family.</text>
</comment>
<sequence>MRLRNKPWAVKLVNEHPESVLQNPDPEKKIDWAARFGNDNTIEIEVGSGKGHFITTLAENNPDKNYVALELQTTAAGIILRTKLEKGLDNLQILRGDAADINCFFPENSTNVIYLNFSDPWPKTRHEKRRLTYKSFLAKYQQVLTKDGHIEFKTDNSGLFAYSVQSMNNFGMHFDFVSVDLHHEKPEIVEKNIETEYEHKFAAKGNPIYALHADFEA</sequence>
<keyword id="KW-0489">Methyltransferase</keyword>
<keyword id="KW-0949">S-adenosyl-L-methionine</keyword>
<keyword id="KW-0808">Transferase</keyword>
<keyword id="KW-0819">tRNA processing</keyword>
<reference key="1">
    <citation type="journal article" date="2008" name="J. Bacteriol.">
        <title>Genome sequence of Lactobacillus helveticus: an organism distinguished by selective gene loss and IS element expansion.</title>
        <authorList>
            <person name="Callanan M."/>
            <person name="Kaleta P."/>
            <person name="O'Callaghan J."/>
            <person name="O'Sullivan O."/>
            <person name="Jordan K."/>
            <person name="McAuliffe O."/>
            <person name="Sangrador-Vegas A."/>
            <person name="Slattery L."/>
            <person name="Fitzgerald G.F."/>
            <person name="Beresford T."/>
            <person name="Ross R.P."/>
        </authorList>
    </citation>
    <scope>NUCLEOTIDE SEQUENCE [LARGE SCALE GENOMIC DNA]</scope>
    <source>
        <strain>DPC 4571</strain>
    </source>
</reference>
<organism>
    <name type="scientific">Lactobacillus helveticus (strain DPC 4571)</name>
    <dbReference type="NCBI Taxonomy" id="405566"/>
    <lineage>
        <taxon>Bacteria</taxon>
        <taxon>Bacillati</taxon>
        <taxon>Bacillota</taxon>
        <taxon>Bacilli</taxon>
        <taxon>Lactobacillales</taxon>
        <taxon>Lactobacillaceae</taxon>
        <taxon>Lactobacillus</taxon>
    </lineage>
</organism>
<protein>
    <recommendedName>
        <fullName evidence="2">tRNA (guanine-N(7)-)-methyltransferase</fullName>
        <ecNumber evidence="2">2.1.1.33</ecNumber>
    </recommendedName>
    <alternativeName>
        <fullName evidence="2">tRNA (guanine(46)-N(7))-methyltransferase</fullName>
    </alternativeName>
    <alternativeName>
        <fullName evidence="2">tRNA(m7G46)-methyltransferase</fullName>
    </alternativeName>
</protein>
<name>TRMB_LACH4</name>